<name>DER_STAAM</name>
<comment type="function">
    <text evidence="1">GTPase that plays an essential role in the late steps of ribosome biogenesis.</text>
</comment>
<comment type="subunit">
    <text evidence="1">Associates with the 50S ribosomal subunit.</text>
</comment>
<comment type="similarity">
    <text evidence="1">Belongs to the TRAFAC class TrmE-Era-EngA-EngB-Septin-like GTPase superfamily. EngA (Der) GTPase family.</text>
</comment>
<dbReference type="EMBL" id="BA000017">
    <property type="protein sequence ID" value="BAB57637.1"/>
    <property type="molecule type" value="Genomic_DNA"/>
</dbReference>
<dbReference type="RefSeq" id="WP_000165530.1">
    <property type="nucleotide sequence ID" value="NC_002758.2"/>
</dbReference>
<dbReference type="SMR" id="P64059"/>
<dbReference type="KEGG" id="sav:SAV1475"/>
<dbReference type="HOGENOM" id="CLU_016077_6_2_9"/>
<dbReference type="PhylomeDB" id="P64059"/>
<dbReference type="Proteomes" id="UP000002481">
    <property type="component" value="Chromosome"/>
</dbReference>
<dbReference type="GO" id="GO:0005525">
    <property type="term" value="F:GTP binding"/>
    <property type="evidence" value="ECO:0007669"/>
    <property type="project" value="UniProtKB-UniRule"/>
</dbReference>
<dbReference type="GO" id="GO:0043022">
    <property type="term" value="F:ribosome binding"/>
    <property type="evidence" value="ECO:0007669"/>
    <property type="project" value="TreeGrafter"/>
</dbReference>
<dbReference type="GO" id="GO:0042254">
    <property type="term" value="P:ribosome biogenesis"/>
    <property type="evidence" value="ECO:0007669"/>
    <property type="project" value="UniProtKB-KW"/>
</dbReference>
<dbReference type="CDD" id="cd01894">
    <property type="entry name" value="EngA1"/>
    <property type="match status" value="1"/>
</dbReference>
<dbReference type="CDD" id="cd01895">
    <property type="entry name" value="EngA2"/>
    <property type="match status" value="1"/>
</dbReference>
<dbReference type="FunFam" id="3.30.300.20:FF:000004">
    <property type="entry name" value="GTPase Der"/>
    <property type="match status" value="1"/>
</dbReference>
<dbReference type="FunFam" id="3.40.50.300:FF:000040">
    <property type="entry name" value="GTPase Der"/>
    <property type="match status" value="1"/>
</dbReference>
<dbReference type="FunFam" id="3.40.50.300:FF:000057">
    <property type="entry name" value="GTPase Der"/>
    <property type="match status" value="1"/>
</dbReference>
<dbReference type="Gene3D" id="3.30.300.20">
    <property type="match status" value="1"/>
</dbReference>
<dbReference type="Gene3D" id="3.40.50.300">
    <property type="entry name" value="P-loop containing nucleotide triphosphate hydrolases"/>
    <property type="match status" value="2"/>
</dbReference>
<dbReference type="HAMAP" id="MF_00195">
    <property type="entry name" value="GTPase_Der"/>
    <property type="match status" value="1"/>
</dbReference>
<dbReference type="InterPro" id="IPR031166">
    <property type="entry name" value="G_ENGA"/>
</dbReference>
<dbReference type="InterPro" id="IPR006073">
    <property type="entry name" value="GTP-bd"/>
</dbReference>
<dbReference type="InterPro" id="IPR016484">
    <property type="entry name" value="GTPase_Der"/>
</dbReference>
<dbReference type="InterPro" id="IPR032859">
    <property type="entry name" value="KH_dom-like"/>
</dbReference>
<dbReference type="InterPro" id="IPR015946">
    <property type="entry name" value="KH_dom-like_a/b"/>
</dbReference>
<dbReference type="InterPro" id="IPR027417">
    <property type="entry name" value="P-loop_NTPase"/>
</dbReference>
<dbReference type="InterPro" id="IPR005225">
    <property type="entry name" value="Small_GTP-bd"/>
</dbReference>
<dbReference type="NCBIfam" id="TIGR03594">
    <property type="entry name" value="GTPase_EngA"/>
    <property type="match status" value="1"/>
</dbReference>
<dbReference type="NCBIfam" id="TIGR00231">
    <property type="entry name" value="small_GTP"/>
    <property type="match status" value="2"/>
</dbReference>
<dbReference type="PANTHER" id="PTHR43834">
    <property type="entry name" value="GTPASE DER"/>
    <property type="match status" value="1"/>
</dbReference>
<dbReference type="PANTHER" id="PTHR43834:SF6">
    <property type="entry name" value="GTPASE DER"/>
    <property type="match status" value="1"/>
</dbReference>
<dbReference type="Pfam" id="PF14714">
    <property type="entry name" value="KH_dom-like"/>
    <property type="match status" value="1"/>
</dbReference>
<dbReference type="Pfam" id="PF01926">
    <property type="entry name" value="MMR_HSR1"/>
    <property type="match status" value="2"/>
</dbReference>
<dbReference type="PIRSF" id="PIRSF006485">
    <property type="entry name" value="GTP-binding_EngA"/>
    <property type="match status" value="1"/>
</dbReference>
<dbReference type="PRINTS" id="PR00326">
    <property type="entry name" value="GTP1OBG"/>
</dbReference>
<dbReference type="SUPFAM" id="SSF52540">
    <property type="entry name" value="P-loop containing nucleoside triphosphate hydrolases"/>
    <property type="match status" value="2"/>
</dbReference>
<dbReference type="PROSITE" id="PS51712">
    <property type="entry name" value="G_ENGA"/>
    <property type="match status" value="2"/>
</dbReference>
<accession>P64059</accession>
<accession>Q99U15</accession>
<keyword id="KW-0342">GTP-binding</keyword>
<keyword id="KW-0547">Nucleotide-binding</keyword>
<keyword id="KW-0677">Repeat</keyword>
<keyword id="KW-0690">Ribosome biogenesis</keyword>
<organism>
    <name type="scientific">Staphylococcus aureus (strain Mu50 / ATCC 700699)</name>
    <dbReference type="NCBI Taxonomy" id="158878"/>
    <lineage>
        <taxon>Bacteria</taxon>
        <taxon>Bacillati</taxon>
        <taxon>Bacillota</taxon>
        <taxon>Bacilli</taxon>
        <taxon>Bacillales</taxon>
        <taxon>Staphylococcaceae</taxon>
        <taxon>Staphylococcus</taxon>
    </lineage>
</organism>
<evidence type="ECO:0000255" key="1">
    <source>
        <dbReference type="HAMAP-Rule" id="MF_00195"/>
    </source>
</evidence>
<protein>
    <recommendedName>
        <fullName evidence="1">GTPase Der</fullName>
    </recommendedName>
    <alternativeName>
        <fullName evidence="1">GTP-binding protein EngA</fullName>
    </alternativeName>
</protein>
<sequence>MTKPIVAIVGRPNVGKSTIFNRIVGERVSIVEDTPGVTRDRIYSSGEWLTHDFNIIDTGGIEIGDAPFQTQIRAQAEIAIDEADVIIFMVNVREGLTQSDEMVAQILYKSKKPVVLAVNKVDNMEMRTDVYDFYSLGFGEPYPISGSHGLGLGDLLDAVVSHFGEEEEDPYDEDTIRLSIIGRPNVGKSSLVNAILGEDRVIVSNVAGTTRDAIDTEYSYDGQDYVLIDTAGMRKKGKVYESTEKYSVLRALKAIERSNVVLVVIDAEQGIIEQDKRVAGYAHEQGKAVVIVVNKWDTVEKDSKTMKKFEDEVRKEFQFLDYAQIAFVSAKERTRLRTLFPYINEASENHKKRVQSSTLNEVVTDAISMNPTPTDKGRRLNVFYATQVAIEPPTFVVFVNDVELMHFSYKRYLENQIRAAFGFEGTPIHIIARKRN</sequence>
<proteinExistence type="inferred from homology"/>
<feature type="chain" id="PRO_0000179043" description="GTPase Der">
    <location>
        <begin position="1"/>
        <end position="436"/>
    </location>
</feature>
<feature type="domain" description="EngA-type G 1">
    <location>
        <begin position="4"/>
        <end position="167"/>
    </location>
</feature>
<feature type="domain" description="EngA-type G 2">
    <location>
        <begin position="176"/>
        <end position="351"/>
    </location>
</feature>
<feature type="domain" description="KH-like" evidence="1">
    <location>
        <begin position="352"/>
        <end position="436"/>
    </location>
</feature>
<feature type="binding site" evidence="1">
    <location>
        <begin position="10"/>
        <end position="17"/>
    </location>
    <ligand>
        <name>GTP</name>
        <dbReference type="ChEBI" id="CHEBI:37565"/>
        <label>1</label>
    </ligand>
</feature>
<feature type="binding site" evidence="1">
    <location>
        <begin position="57"/>
        <end position="61"/>
    </location>
    <ligand>
        <name>GTP</name>
        <dbReference type="ChEBI" id="CHEBI:37565"/>
        <label>1</label>
    </ligand>
</feature>
<feature type="binding site" evidence="1">
    <location>
        <begin position="119"/>
        <end position="122"/>
    </location>
    <ligand>
        <name>GTP</name>
        <dbReference type="ChEBI" id="CHEBI:37565"/>
        <label>1</label>
    </ligand>
</feature>
<feature type="binding site" evidence="1">
    <location>
        <begin position="182"/>
        <end position="189"/>
    </location>
    <ligand>
        <name>GTP</name>
        <dbReference type="ChEBI" id="CHEBI:37565"/>
        <label>2</label>
    </ligand>
</feature>
<feature type="binding site" evidence="1">
    <location>
        <begin position="229"/>
        <end position="233"/>
    </location>
    <ligand>
        <name>GTP</name>
        <dbReference type="ChEBI" id="CHEBI:37565"/>
        <label>2</label>
    </ligand>
</feature>
<feature type="binding site" evidence="1">
    <location>
        <begin position="294"/>
        <end position="297"/>
    </location>
    <ligand>
        <name>GTP</name>
        <dbReference type="ChEBI" id="CHEBI:37565"/>
        <label>2</label>
    </ligand>
</feature>
<gene>
    <name evidence="1" type="primary">der</name>
    <name type="synonym">engA</name>
    <name type="ordered locus">SAV1475</name>
</gene>
<reference key="1">
    <citation type="journal article" date="2001" name="Lancet">
        <title>Whole genome sequencing of meticillin-resistant Staphylococcus aureus.</title>
        <authorList>
            <person name="Kuroda M."/>
            <person name="Ohta T."/>
            <person name="Uchiyama I."/>
            <person name="Baba T."/>
            <person name="Yuzawa H."/>
            <person name="Kobayashi I."/>
            <person name="Cui L."/>
            <person name="Oguchi A."/>
            <person name="Aoki K."/>
            <person name="Nagai Y."/>
            <person name="Lian J.-Q."/>
            <person name="Ito T."/>
            <person name="Kanamori M."/>
            <person name="Matsumaru H."/>
            <person name="Maruyama A."/>
            <person name="Murakami H."/>
            <person name="Hosoyama A."/>
            <person name="Mizutani-Ui Y."/>
            <person name="Takahashi N.K."/>
            <person name="Sawano T."/>
            <person name="Inoue R."/>
            <person name="Kaito C."/>
            <person name="Sekimizu K."/>
            <person name="Hirakawa H."/>
            <person name="Kuhara S."/>
            <person name="Goto S."/>
            <person name="Yabuzaki J."/>
            <person name="Kanehisa M."/>
            <person name="Yamashita A."/>
            <person name="Oshima K."/>
            <person name="Furuya K."/>
            <person name="Yoshino C."/>
            <person name="Shiba T."/>
            <person name="Hattori M."/>
            <person name="Ogasawara N."/>
            <person name="Hayashi H."/>
            <person name="Hiramatsu K."/>
        </authorList>
    </citation>
    <scope>NUCLEOTIDE SEQUENCE [LARGE SCALE GENOMIC DNA]</scope>
    <source>
        <strain>Mu50 / ATCC 700699</strain>
    </source>
</reference>